<name>PEX10_YEAST</name>
<sequence length="337" mass="39099">MKNDNKLQKEALMRLSQLRFPFADAPSIVQAHQKDEQIQGLLIMKVTELCKLIKSQLFVNSYPKELSIFAKLLYLLFTTGRRGRTLGEEYVDLTYTNRKGTRLAGRLKMIVFAFAYPLCPYFITKLYKKIMKNNKESKIEDTESVAAFCKGLLDFILDVHMTLFYFKGAFYSISKRIFGMRYVFKHILSKNEANFREEGSQKYKVLGYILLAQNVMKWYPVLTSTLGSWIYGRKRTNDSITRSSVGLQERSEHESIEGIPKESQLTHINLSDKNQLPFIPEASRKCILCLMNMSDPSCAPCGHLFCWSCLMSWCKERPECPLCRQHCQPQEILVLRQ</sequence>
<evidence type="ECO:0000250" key="1">
    <source>
        <dbReference type="UniProtKB" id="G2Q0E2"/>
    </source>
</evidence>
<evidence type="ECO:0000255" key="2"/>
<evidence type="ECO:0000255" key="3">
    <source>
        <dbReference type="PROSITE-ProRule" id="PRU00175"/>
    </source>
</evidence>
<evidence type="ECO:0000269" key="4">
    <source>
    </source>
</evidence>
<evidence type="ECO:0000269" key="5">
    <source>
    </source>
</evidence>
<evidence type="ECO:0000269" key="6">
    <source>
    </source>
</evidence>
<evidence type="ECO:0000269" key="7">
    <source>
    </source>
</evidence>
<evidence type="ECO:0000269" key="8">
    <source>
    </source>
</evidence>
<evidence type="ECO:0000269" key="9">
    <source>
    </source>
</evidence>
<evidence type="ECO:0000269" key="10">
    <source>
    </source>
</evidence>
<evidence type="ECO:0000303" key="11">
    <source>
    </source>
</evidence>
<evidence type="ECO:0000305" key="12"/>
<evidence type="ECO:0000312" key="13">
    <source>
        <dbReference type="SGD" id="S000002673"/>
    </source>
</evidence>
<comment type="function">
    <text evidence="5 6 7 8 10">E3 ubiquitin-protein ligase component of a retrotranslocation channel required for peroxisome organization by mediating export of the PEX5 receptor from peroxisomes to the cytosol, thereby promoting PEX5 recycling (PubMed:18644345, PubMed:19687296, PubMed:22471590, PubMed:35768507). The retrotranslocation channel is composed of PEX2, PEX10 and PEX12; each subunit contributing transmembrane segments that coassemble into an open channel that specifically allows the passage of PEX5 through the peroxisomal membrane (PubMed:35768507). PEX10 also regulates PEX5 recycling by acting as a E3 ubiquitin-protein ligase (PubMed:15283676, PubMed:18644345, PubMed:35768507). When PEX5 recycling is compromised, PEX10 catalyzes polyubiquitination of PEX5 during its passage through the retrotranslocation channel, leading to its degradation (PubMed:35768507).</text>
</comment>
<comment type="catalytic activity">
    <reaction evidence="6 10">
        <text>S-ubiquitinyl-[E2 ubiquitin-conjugating enzyme]-L-cysteine + [acceptor protein]-L-lysine = [E2 ubiquitin-conjugating enzyme]-L-cysteine + N(6)-ubiquitinyl-[acceptor protein]-L-lysine.</text>
        <dbReference type="EC" id="2.3.2.27"/>
    </reaction>
</comment>
<comment type="activity regulation">
    <text evidence="10">The E3 ubiquitin-protein ligase activity is stimulated by PEX12.</text>
</comment>
<comment type="pathway">
    <text evidence="6 7 8 10">Protein modification; protein ubiquitination.</text>
</comment>
<comment type="subunit">
    <text evidence="8 10">Component of the PEX2-PEX10-PEX12 retrotranslocation channel, composed of PEX2, PEX10 and PEX12.</text>
</comment>
<comment type="interaction">
    <interactant intactId="EBI-13194">
        <id>Q05568</id>
    </interactant>
    <interactant intactId="EBI-2077297">
        <id>Q04370</id>
        <label>PEX12</label>
    </interactant>
    <organismsDiffer>false</organismsDiffer>
    <experiments>13</experiments>
</comment>
<comment type="interaction">
    <interactant intactId="EBI-13194">
        <id>Q05568</id>
    </interactant>
    <interactant intactId="EBI-13206">
        <id>P80667</id>
        <label>PEX13</label>
    </interactant>
    <organismsDiffer>false</organismsDiffer>
    <experiments>8</experiments>
</comment>
<comment type="interaction">
    <interactant intactId="EBI-13194">
        <id>Q05568</id>
    </interactant>
    <interactant intactId="EBI-13160">
        <id>P32800</id>
        <label>PEX2</label>
    </interactant>
    <organismsDiffer>false</organismsDiffer>
    <experiments>15</experiments>
</comment>
<comment type="subcellular location">
    <subcellularLocation>
        <location evidence="4 9 10">Peroxisome membrane</location>
        <topology evidence="2">Multi-pass membrane protein</topology>
    </subcellularLocation>
</comment>
<comment type="domain">
    <text evidence="1">The three subunits of the retrotranslocation channel (PEX2, PEX10 and PEX12) coassemble in the membrane into a channel with an open 10 Angstrom pore (By similarity). The RING-type zinc-fingers that catalyze PEX5 receptor ubiquitination are positioned above the pore on the cytosolic side of the complex (By similarity).</text>
</comment>
<comment type="similarity">
    <text evidence="12">Belongs to the pex2/pex10/pex12 family.</text>
</comment>
<protein>
    <recommendedName>
        <fullName evidence="12">Peroxisome biogenesis factor 10</fullName>
        <ecNumber evidence="6 10">2.3.2.27</ecNumber>
    </recommendedName>
    <alternativeName>
        <fullName evidence="12">Peroxin-10</fullName>
    </alternativeName>
    <alternativeName>
        <fullName>Peroxisomal biogenesis factor 10</fullName>
    </alternativeName>
    <alternativeName>
        <fullName>Peroxisome assembly protein 10</fullName>
    </alternativeName>
</protein>
<accession>Q05568</accession>
<accession>D6VSP9</accession>
<accession>E9P8T2</accession>
<feature type="chain" id="PRO_0000056381" description="Peroxisome biogenesis factor 10">
    <location>
        <begin position="1"/>
        <end position="337"/>
    </location>
</feature>
<feature type="topological domain" description="Peroxisomal matrix" evidence="1">
    <location>
        <begin position="1"/>
        <end position="24"/>
    </location>
</feature>
<feature type="transmembrane region" description="Helical; Name=TM1" evidence="1">
    <location>
        <begin position="25"/>
        <end position="54"/>
    </location>
</feature>
<feature type="topological domain" description="Cytoplasmic" evidence="1">
    <location>
        <position position="55"/>
    </location>
</feature>
<feature type="transmembrane region" description="Helical; Name=TM2" evidence="1">
    <location>
        <begin position="56"/>
        <end position="77"/>
    </location>
</feature>
<feature type="topological domain" description="Peroxisomal matrix" evidence="1">
    <location>
        <begin position="78"/>
        <end position="105"/>
    </location>
</feature>
<feature type="transmembrane region" description="Helical; Name=TM3" evidence="1">
    <location>
        <begin position="106"/>
        <end position="138"/>
    </location>
</feature>
<feature type="topological domain" description="Cytoplasmic" evidence="1">
    <location>
        <begin position="139"/>
        <end position="145"/>
    </location>
</feature>
<feature type="transmembrane region" description="Helical; Name=TM4" evidence="1">
    <location>
        <begin position="146"/>
        <end position="166"/>
    </location>
</feature>
<feature type="topological domain" description="Peroxisomal matrix" evidence="1">
    <location>
        <begin position="167"/>
        <end position="202"/>
    </location>
</feature>
<feature type="transmembrane region" description="Helical; Name=TM5" evidence="1">
    <location>
        <begin position="203"/>
        <end position="222"/>
    </location>
</feature>
<feature type="topological domain" description="Cytoplasmic" evidence="1">
    <location>
        <begin position="223"/>
        <end position="337"/>
    </location>
</feature>
<feature type="zinc finger region" description="RING-type" evidence="3">
    <location>
        <begin position="286"/>
        <end position="327"/>
    </location>
</feature>
<feature type="binding site" evidence="1">
    <location>
        <position position="286"/>
    </location>
    <ligand>
        <name>Zn(2+)</name>
        <dbReference type="ChEBI" id="CHEBI:29105"/>
        <label>1</label>
    </ligand>
</feature>
<feature type="binding site" evidence="1">
    <location>
        <position position="289"/>
    </location>
    <ligand>
        <name>Zn(2+)</name>
        <dbReference type="ChEBI" id="CHEBI:29105"/>
        <label>1</label>
    </ligand>
</feature>
<feature type="binding site" evidence="1">
    <location>
        <position position="301"/>
    </location>
    <ligand>
        <name>Zn(2+)</name>
        <dbReference type="ChEBI" id="CHEBI:29105"/>
        <label>2</label>
    </ligand>
</feature>
<feature type="binding site" evidence="1">
    <location>
        <position position="303"/>
    </location>
    <ligand>
        <name>Zn(2+)</name>
        <dbReference type="ChEBI" id="CHEBI:29105"/>
        <label>2</label>
    </ligand>
</feature>
<feature type="binding site" evidence="1">
    <location>
        <position position="306"/>
    </location>
    <ligand>
        <name>Zn(2+)</name>
        <dbReference type="ChEBI" id="CHEBI:29105"/>
        <label>1</label>
    </ligand>
</feature>
<feature type="binding site" evidence="1">
    <location>
        <position position="309"/>
    </location>
    <ligand>
        <name>Zn(2+)</name>
        <dbReference type="ChEBI" id="CHEBI:29105"/>
        <label>1</label>
    </ligand>
</feature>
<feature type="binding site" evidence="1">
    <location>
        <position position="320"/>
    </location>
    <ligand>
        <name>Zn(2+)</name>
        <dbReference type="ChEBI" id="CHEBI:29105"/>
        <label>2</label>
    </ligand>
</feature>
<feature type="binding site" evidence="1">
    <location>
        <position position="323"/>
    </location>
    <ligand>
        <name>Zn(2+)</name>
        <dbReference type="ChEBI" id="CHEBI:29105"/>
        <label>2</label>
    </ligand>
</feature>
<feature type="mutagenesis site" description="Abolished interaction with PEX12, leading to prevent E3 ubiquitin-protein ligase activity." evidence="10">
    <original>L</original>
    <variation>A</variation>
    <location>
        <position position="270"/>
    </location>
</feature>
<feature type="mutagenesis site" description="Abolished E3 ubiquitin-protein ligase activity." evidence="6 10">
    <original>L</original>
    <variation>A</variation>
    <location>
        <position position="288"/>
    </location>
</feature>
<feature type="mutagenesis site" description="Abolished E3 ubiquitin-protein ligase activity, leading to impaired peroxisome biogenesis." evidence="10">
    <original>C</original>
    <variation>S</variation>
    <location>
        <position position="301"/>
    </location>
</feature>
<feature type="mutagenesis site" description="Reduced E3 ubiquitin-protein ligase activity." evidence="6">
    <original>L</original>
    <variation>A</variation>
    <location>
        <position position="322"/>
    </location>
</feature>
<feature type="mutagenesis site" description="E3 ubiquitin-protein ligase activity." evidence="10">
    <original>R</original>
    <variation>A</variation>
    <location>
        <position position="324"/>
    </location>
</feature>
<feature type="sequence conflict" description="In Ref. 3; AAS56114." evidence="12" ref="3">
    <original>V</original>
    <variation>A</variation>
    <location>
        <position position="183"/>
    </location>
</feature>
<gene>
    <name evidence="11 13" type="primary">PEX10</name>
    <name type="synonym">PAS4</name>
    <name type="ordered locus">YDR265W</name>
    <name type="ORF">D9954.8</name>
</gene>
<keyword id="KW-0472">Membrane</keyword>
<keyword id="KW-0479">Metal-binding</keyword>
<keyword id="KW-0576">Peroxisome</keyword>
<keyword id="KW-0962">Peroxisome biogenesis</keyword>
<keyword id="KW-0653">Protein transport</keyword>
<keyword id="KW-1185">Reference proteome</keyword>
<keyword id="KW-0808">Transferase</keyword>
<keyword id="KW-0812">Transmembrane</keyword>
<keyword id="KW-1133">Transmembrane helix</keyword>
<keyword id="KW-0813">Transport</keyword>
<keyword id="KW-0833">Ubl conjugation pathway</keyword>
<keyword id="KW-0862">Zinc</keyword>
<keyword id="KW-0863">Zinc-finger</keyword>
<proteinExistence type="evidence at protein level"/>
<organism>
    <name type="scientific">Saccharomyces cerevisiae (strain ATCC 204508 / S288c)</name>
    <name type="common">Baker's yeast</name>
    <dbReference type="NCBI Taxonomy" id="559292"/>
    <lineage>
        <taxon>Eukaryota</taxon>
        <taxon>Fungi</taxon>
        <taxon>Dikarya</taxon>
        <taxon>Ascomycota</taxon>
        <taxon>Saccharomycotina</taxon>
        <taxon>Saccharomycetes</taxon>
        <taxon>Saccharomycetales</taxon>
        <taxon>Saccharomycetaceae</taxon>
        <taxon>Saccharomyces</taxon>
    </lineage>
</organism>
<dbReference type="EC" id="2.3.2.27" evidence="6 10"/>
<dbReference type="EMBL" id="U51030">
    <property type="protein sequence ID" value="AAB64453.1"/>
    <property type="molecule type" value="Genomic_DNA"/>
</dbReference>
<dbReference type="EMBL" id="AY557788">
    <property type="protein sequence ID" value="AAS56114.1"/>
    <property type="molecule type" value="Genomic_DNA"/>
</dbReference>
<dbReference type="EMBL" id="BK006938">
    <property type="protein sequence ID" value="DAA12109.1"/>
    <property type="molecule type" value="Genomic_DNA"/>
</dbReference>
<dbReference type="PIR" id="S70125">
    <property type="entry name" value="S70125"/>
</dbReference>
<dbReference type="RefSeq" id="NP_010551.1">
    <property type="nucleotide sequence ID" value="NM_001180573.1"/>
</dbReference>
<dbReference type="SMR" id="Q05568"/>
<dbReference type="BioGRID" id="32321">
    <property type="interactions" value="184"/>
</dbReference>
<dbReference type="ComplexPortal" id="CPX-1903">
    <property type="entry name" value="PEX2-PEX10-PEX12 ubiquitin ligase complex"/>
</dbReference>
<dbReference type="DIP" id="DIP-7566N"/>
<dbReference type="FunCoup" id="Q05568">
    <property type="interactions" value="353"/>
</dbReference>
<dbReference type="IntAct" id="Q05568">
    <property type="interactions" value="16"/>
</dbReference>
<dbReference type="MINT" id="Q05568"/>
<dbReference type="STRING" id="4932.YDR265W"/>
<dbReference type="TCDB" id="3.A.20.1.5">
    <property type="family name" value="the peroxisomal protein importer (ppi) family"/>
</dbReference>
<dbReference type="iPTMnet" id="Q05568"/>
<dbReference type="PaxDb" id="4932-YDR265W"/>
<dbReference type="PeptideAtlas" id="Q05568"/>
<dbReference type="EnsemblFungi" id="YDR265W_mRNA">
    <property type="protein sequence ID" value="YDR265W"/>
    <property type="gene ID" value="YDR265W"/>
</dbReference>
<dbReference type="GeneID" id="851858"/>
<dbReference type="KEGG" id="sce:YDR265W"/>
<dbReference type="AGR" id="SGD:S000002673"/>
<dbReference type="SGD" id="S000002673">
    <property type="gene designation" value="PEX10"/>
</dbReference>
<dbReference type="VEuPathDB" id="FungiDB:YDR265W"/>
<dbReference type="eggNOG" id="KOG0317">
    <property type="taxonomic scope" value="Eukaryota"/>
</dbReference>
<dbReference type="GeneTree" id="ENSGT00510000048446"/>
<dbReference type="HOGENOM" id="CLU_041707_2_0_1"/>
<dbReference type="InParanoid" id="Q05568"/>
<dbReference type="OMA" id="YCDVVQL"/>
<dbReference type="OrthoDB" id="6270329at2759"/>
<dbReference type="BioCyc" id="YEAST:G3O-29835-MONOMER"/>
<dbReference type="Reactome" id="R-SCE-8866654">
    <property type="pathway name" value="E3 ubiquitin ligases ubiquitinate target proteins"/>
</dbReference>
<dbReference type="Reactome" id="R-SCE-9033241">
    <property type="pathway name" value="Peroxisomal protein import"/>
</dbReference>
<dbReference type="UniPathway" id="UPA00143"/>
<dbReference type="BioGRID-ORCS" id="851858">
    <property type="hits" value="0 hits in 10 CRISPR screens"/>
</dbReference>
<dbReference type="PRO" id="PR:Q05568"/>
<dbReference type="Proteomes" id="UP000002311">
    <property type="component" value="Chromosome IV"/>
</dbReference>
<dbReference type="RNAct" id="Q05568">
    <property type="molecule type" value="protein"/>
</dbReference>
<dbReference type="GO" id="GO:1990429">
    <property type="term" value="C:peroxisomal importomer complex"/>
    <property type="evidence" value="ECO:0000314"/>
    <property type="project" value="SGD"/>
</dbReference>
<dbReference type="GO" id="GO:0005778">
    <property type="term" value="C:peroxisomal membrane"/>
    <property type="evidence" value="ECO:0000314"/>
    <property type="project" value="UniProtKB"/>
</dbReference>
<dbReference type="GO" id="GO:1902495">
    <property type="term" value="C:transmembrane transporter complex"/>
    <property type="evidence" value="ECO:0000314"/>
    <property type="project" value="UniProt"/>
</dbReference>
<dbReference type="GO" id="GO:0000151">
    <property type="term" value="C:ubiquitin ligase complex"/>
    <property type="evidence" value="ECO:0000353"/>
    <property type="project" value="ComplexPortal"/>
</dbReference>
<dbReference type="GO" id="GO:0008320">
    <property type="term" value="F:protein transmembrane transporter activity"/>
    <property type="evidence" value="ECO:0000314"/>
    <property type="project" value="UniProtKB"/>
</dbReference>
<dbReference type="GO" id="GO:0061630">
    <property type="term" value="F:ubiquitin protein ligase activity"/>
    <property type="evidence" value="ECO:0000314"/>
    <property type="project" value="UniProtKB"/>
</dbReference>
<dbReference type="GO" id="GO:0008270">
    <property type="term" value="F:zinc ion binding"/>
    <property type="evidence" value="ECO:0007669"/>
    <property type="project" value="UniProtKB-KW"/>
</dbReference>
<dbReference type="GO" id="GO:0043161">
    <property type="term" value="P:proteasome-mediated ubiquitin-dependent protein catabolic process"/>
    <property type="evidence" value="ECO:0000314"/>
    <property type="project" value="UniProt"/>
</dbReference>
<dbReference type="GO" id="GO:0016558">
    <property type="term" value="P:protein import into peroxisome matrix"/>
    <property type="evidence" value="ECO:0000315"/>
    <property type="project" value="SGD"/>
</dbReference>
<dbReference type="GO" id="GO:0016562">
    <property type="term" value="P:protein import into peroxisome matrix, receptor recycling"/>
    <property type="evidence" value="ECO:0000314"/>
    <property type="project" value="UniProtKB"/>
</dbReference>
<dbReference type="GO" id="GO:0044721">
    <property type="term" value="P:protein import into peroxisome matrix, substrate release"/>
    <property type="evidence" value="ECO:0000314"/>
    <property type="project" value="UniProtKB"/>
</dbReference>
<dbReference type="GO" id="GO:0000209">
    <property type="term" value="P:protein polyubiquitination"/>
    <property type="evidence" value="ECO:0000314"/>
    <property type="project" value="UniProtKB"/>
</dbReference>
<dbReference type="GO" id="GO:0006515">
    <property type="term" value="P:protein quality control for misfolded or incompletely synthesized proteins"/>
    <property type="evidence" value="ECO:0000314"/>
    <property type="project" value="UniProt"/>
</dbReference>
<dbReference type="GO" id="GO:0016567">
    <property type="term" value="P:protein ubiquitination"/>
    <property type="evidence" value="ECO:0000314"/>
    <property type="project" value="ComplexPortal"/>
</dbReference>
<dbReference type="CDD" id="cd16527">
    <property type="entry name" value="RING-HC_PEX10"/>
    <property type="match status" value="1"/>
</dbReference>
<dbReference type="FunFam" id="3.30.40.10:FF:000617">
    <property type="entry name" value="Peroxin 10"/>
    <property type="match status" value="1"/>
</dbReference>
<dbReference type="Gene3D" id="3.30.40.10">
    <property type="entry name" value="Zinc/RING finger domain, C3HC4 (zinc finger)"/>
    <property type="match status" value="1"/>
</dbReference>
<dbReference type="InterPro" id="IPR025654">
    <property type="entry name" value="PEX2/10"/>
</dbReference>
<dbReference type="InterPro" id="IPR006845">
    <property type="entry name" value="Pex_N"/>
</dbReference>
<dbReference type="InterPro" id="IPR001841">
    <property type="entry name" value="Znf_RING"/>
</dbReference>
<dbReference type="InterPro" id="IPR013083">
    <property type="entry name" value="Znf_RING/FYVE/PHD"/>
</dbReference>
<dbReference type="InterPro" id="IPR017907">
    <property type="entry name" value="Znf_RING_CS"/>
</dbReference>
<dbReference type="PANTHER" id="PTHR23350">
    <property type="entry name" value="PEROXISOME ASSEMBLY PROTEIN 10"/>
    <property type="match status" value="1"/>
</dbReference>
<dbReference type="PANTHER" id="PTHR23350:SF0">
    <property type="entry name" value="PEROXISOME BIOGENESIS FACTOR 10"/>
    <property type="match status" value="1"/>
</dbReference>
<dbReference type="Pfam" id="PF04757">
    <property type="entry name" value="Pex2_Pex12"/>
    <property type="match status" value="1"/>
</dbReference>
<dbReference type="Pfam" id="PF13639">
    <property type="entry name" value="zf-RING_2"/>
    <property type="match status" value="1"/>
</dbReference>
<dbReference type="SMART" id="SM00184">
    <property type="entry name" value="RING"/>
    <property type="match status" value="1"/>
</dbReference>
<dbReference type="SUPFAM" id="SSF57850">
    <property type="entry name" value="RING/U-box"/>
    <property type="match status" value="1"/>
</dbReference>
<dbReference type="PROSITE" id="PS00518">
    <property type="entry name" value="ZF_RING_1"/>
    <property type="match status" value="1"/>
</dbReference>
<dbReference type="PROSITE" id="PS50089">
    <property type="entry name" value="ZF_RING_2"/>
    <property type="match status" value="1"/>
</dbReference>
<reference key="1">
    <citation type="journal article" date="1997" name="Nature">
        <title>The nucleotide sequence of Saccharomyces cerevisiae chromosome IV.</title>
        <authorList>
            <person name="Jacq C."/>
            <person name="Alt-Moerbe J."/>
            <person name="Andre B."/>
            <person name="Arnold W."/>
            <person name="Bahr A."/>
            <person name="Ballesta J.P.G."/>
            <person name="Bargues M."/>
            <person name="Baron L."/>
            <person name="Becker A."/>
            <person name="Biteau N."/>
            <person name="Bloecker H."/>
            <person name="Blugeon C."/>
            <person name="Boskovic J."/>
            <person name="Brandt P."/>
            <person name="Brueckner M."/>
            <person name="Buitrago M.J."/>
            <person name="Coster F."/>
            <person name="Delaveau T."/>
            <person name="del Rey F."/>
            <person name="Dujon B."/>
            <person name="Eide L.G."/>
            <person name="Garcia-Cantalejo J.M."/>
            <person name="Goffeau A."/>
            <person name="Gomez-Peris A."/>
            <person name="Granotier C."/>
            <person name="Hanemann V."/>
            <person name="Hankeln T."/>
            <person name="Hoheisel J.D."/>
            <person name="Jaeger W."/>
            <person name="Jimenez A."/>
            <person name="Jonniaux J.-L."/>
            <person name="Kraemer C."/>
            <person name="Kuester H."/>
            <person name="Laamanen P."/>
            <person name="Legros Y."/>
            <person name="Louis E.J."/>
            <person name="Moeller-Rieker S."/>
            <person name="Monnet A."/>
            <person name="Moro M."/>
            <person name="Mueller-Auer S."/>
            <person name="Nussbaumer B."/>
            <person name="Paricio N."/>
            <person name="Paulin L."/>
            <person name="Perea J."/>
            <person name="Perez-Alonso M."/>
            <person name="Perez-Ortin J.E."/>
            <person name="Pohl T.M."/>
            <person name="Prydz H."/>
            <person name="Purnelle B."/>
            <person name="Rasmussen S.W."/>
            <person name="Remacha M.A."/>
            <person name="Revuelta J.L."/>
            <person name="Rieger M."/>
            <person name="Salom D."/>
            <person name="Saluz H.P."/>
            <person name="Saiz J.E."/>
            <person name="Saren A.-M."/>
            <person name="Schaefer M."/>
            <person name="Scharfe M."/>
            <person name="Schmidt E.R."/>
            <person name="Schneider C."/>
            <person name="Scholler P."/>
            <person name="Schwarz S."/>
            <person name="Soler-Mira A."/>
            <person name="Urrestarazu L.A."/>
            <person name="Verhasselt P."/>
            <person name="Vissers S."/>
            <person name="Voet M."/>
            <person name="Volckaert G."/>
            <person name="Wagner G."/>
            <person name="Wambutt R."/>
            <person name="Wedler E."/>
            <person name="Wedler H."/>
            <person name="Woelfl S."/>
            <person name="Harris D.E."/>
            <person name="Bowman S."/>
            <person name="Brown D."/>
            <person name="Churcher C.M."/>
            <person name="Connor R."/>
            <person name="Dedman K."/>
            <person name="Gentles S."/>
            <person name="Hamlin N."/>
            <person name="Hunt S."/>
            <person name="Jones L."/>
            <person name="McDonald S."/>
            <person name="Murphy L.D."/>
            <person name="Niblett D."/>
            <person name="Odell C."/>
            <person name="Oliver K."/>
            <person name="Rajandream M.A."/>
            <person name="Richards C."/>
            <person name="Shore L."/>
            <person name="Walsh S.V."/>
            <person name="Barrell B.G."/>
            <person name="Dietrich F.S."/>
            <person name="Mulligan J.T."/>
            <person name="Allen E."/>
            <person name="Araujo R."/>
            <person name="Aviles E."/>
            <person name="Berno A."/>
            <person name="Carpenter J."/>
            <person name="Chen E."/>
            <person name="Cherry J.M."/>
            <person name="Chung E."/>
            <person name="Duncan M."/>
            <person name="Hunicke-Smith S."/>
            <person name="Hyman R.W."/>
            <person name="Komp C."/>
            <person name="Lashkari D."/>
            <person name="Lew H."/>
            <person name="Lin D."/>
            <person name="Mosedale D."/>
            <person name="Nakahara K."/>
            <person name="Namath A."/>
            <person name="Oefner P."/>
            <person name="Oh C."/>
            <person name="Petel F.X."/>
            <person name="Roberts D."/>
            <person name="Schramm S."/>
            <person name="Schroeder M."/>
            <person name="Shogren T."/>
            <person name="Shroff N."/>
            <person name="Winant A."/>
            <person name="Yelton M.A."/>
            <person name="Botstein D."/>
            <person name="Davis R.W."/>
            <person name="Johnston M."/>
            <person name="Andrews S."/>
            <person name="Brinkman R."/>
            <person name="Cooper J."/>
            <person name="Ding H."/>
            <person name="Du Z."/>
            <person name="Favello A."/>
            <person name="Fulton L."/>
            <person name="Gattung S."/>
            <person name="Greco T."/>
            <person name="Hallsworth K."/>
            <person name="Hawkins J."/>
            <person name="Hillier L.W."/>
            <person name="Jier M."/>
            <person name="Johnson D."/>
            <person name="Johnston L."/>
            <person name="Kirsten J."/>
            <person name="Kucaba T."/>
            <person name="Langston Y."/>
            <person name="Latreille P."/>
            <person name="Le T."/>
            <person name="Mardis E."/>
            <person name="Menezes S."/>
            <person name="Miller N."/>
            <person name="Nhan M."/>
            <person name="Pauley A."/>
            <person name="Peluso D."/>
            <person name="Rifkin L."/>
            <person name="Riles L."/>
            <person name="Taich A."/>
            <person name="Trevaskis E."/>
            <person name="Vignati D."/>
            <person name="Wilcox L."/>
            <person name="Wohldman P."/>
            <person name="Vaudin M."/>
            <person name="Wilson R."/>
            <person name="Waterston R."/>
            <person name="Albermann K."/>
            <person name="Hani J."/>
            <person name="Heumann K."/>
            <person name="Kleine K."/>
            <person name="Mewes H.-W."/>
            <person name="Zollner A."/>
            <person name="Zaccaria P."/>
        </authorList>
    </citation>
    <scope>NUCLEOTIDE SEQUENCE [LARGE SCALE GENOMIC DNA]</scope>
    <source>
        <strain>ATCC 204508 / S288c</strain>
    </source>
</reference>
<reference key="2">
    <citation type="journal article" date="2014" name="G3 (Bethesda)">
        <title>The reference genome sequence of Saccharomyces cerevisiae: Then and now.</title>
        <authorList>
            <person name="Engel S.R."/>
            <person name="Dietrich F.S."/>
            <person name="Fisk D.G."/>
            <person name="Binkley G."/>
            <person name="Balakrishnan R."/>
            <person name="Costanzo M.C."/>
            <person name="Dwight S.S."/>
            <person name="Hitz B.C."/>
            <person name="Karra K."/>
            <person name="Nash R.S."/>
            <person name="Weng S."/>
            <person name="Wong E.D."/>
            <person name="Lloyd P."/>
            <person name="Skrzypek M.S."/>
            <person name="Miyasato S.R."/>
            <person name="Simison M."/>
            <person name="Cherry J.M."/>
        </authorList>
    </citation>
    <scope>GENOME REANNOTATION</scope>
    <source>
        <strain>ATCC 204508 / S288c</strain>
    </source>
</reference>
<reference key="3">
    <citation type="journal article" date="2007" name="Genome Res.">
        <title>Approaching a complete repository of sequence-verified protein-encoding clones for Saccharomyces cerevisiae.</title>
        <authorList>
            <person name="Hu Y."/>
            <person name="Rolfs A."/>
            <person name="Bhullar B."/>
            <person name="Murthy T.V.S."/>
            <person name="Zhu C."/>
            <person name="Berger M.F."/>
            <person name="Camargo A.A."/>
            <person name="Kelley F."/>
            <person name="McCarron S."/>
            <person name="Jepson D."/>
            <person name="Richardson A."/>
            <person name="Raphael J."/>
            <person name="Moreira D."/>
            <person name="Taycher E."/>
            <person name="Zuo D."/>
            <person name="Mohr S."/>
            <person name="Kane M.F."/>
            <person name="Williamson J."/>
            <person name="Simpson A.J.G."/>
            <person name="Bulyk M.L."/>
            <person name="Harlow E."/>
            <person name="Marsischky G."/>
            <person name="Kolodner R.D."/>
            <person name="LaBaer J."/>
        </authorList>
    </citation>
    <scope>NUCLEOTIDE SEQUENCE [GENOMIC DNA]</scope>
    <source>
        <strain>ATCC 204508 / S288c</strain>
    </source>
</reference>
<reference key="4">
    <citation type="journal article" date="2003" name="J. Cell Sci.">
        <title>Pex10p links the ubiquitin conjugating enzyme Pex4p to the protein import machinery of the peroxisome.</title>
        <authorList>
            <person name="Eckert J.H."/>
            <person name="Johnsson N."/>
        </authorList>
    </citation>
    <scope>SUBCELLULAR LOCATION</scope>
</reference>
<reference key="5">
    <citation type="journal article" date="2004" name="Biochem. J.">
        <title>Ubiquitination of the peroxisomal import receptor Pex5p.</title>
        <authorList>
            <person name="Platta H.W."/>
            <person name="Girzalsky W."/>
            <person name="Erdmann R."/>
        </authorList>
    </citation>
    <scope>FUNCTION</scope>
</reference>
<reference key="6">
    <citation type="journal article" date="2008" name="Biochem. Biophys. Res. Commun.">
        <title>Pex10p functions as an E3 ligase for the Ubc4p-dependent ubiquitination of Pex5p.</title>
        <authorList>
            <person name="Williams C."/>
            <person name="van den Berg M."/>
            <person name="Geers E."/>
            <person name="Distel B."/>
        </authorList>
    </citation>
    <scope>FUNCTION</scope>
    <scope>CATALYTIC ACTIVITY</scope>
    <scope>PATHWAY</scope>
    <scope>MUTAGENESIS OF LEU-288 AND LEU-322</scope>
</reference>
<reference key="7">
    <citation type="journal article" date="2009" name="Mol. Cell. Biol.">
        <title>Pex2 and pex12 function as protein-ubiquitin ligases in peroxisomal protein import.</title>
        <authorList>
            <person name="Platta H.W."/>
            <person name="El Magraoui F."/>
            <person name="Baeumer B.E."/>
            <person name="Schlee D."/>
            <person name="Girzalsky W."/>
            <person name="Erdmann R."/>
        </authorList>
    </citation>
    <scope>FUNCTION</scope>
    <scope>PATHWAY</scope>
</reference>
<reference key="8">
    <citation type="journal article" date="2012" name="FEBS J.">
        <title>The RING-type ubiquitin ligases Pex2p, Pex10p and Pex12p form a heteromeric complex that displays enhanced activity in an ubiquitin conjugating enzyme-selective manner.</title>
        <authorList>
            <person name="El Magraoui F."/>
            <person name="Baeumer B.E."/>
            <person name="Platta H.W."/>
            <person name="Baumann J.S."/>
            <person name="Girzalsky W."/>
            <person name="Erdmann R."/>
        </authorList>
    </citation>
    <scope>FUNCTION</scope>
    <scope>PATHWAY</scope>
    <scope>IDENTIFICATION IN THE PEX2-PEX10-PEX12 RETROTRANSLOCATION CHANNEL</scope>
</reference>
<reference key="9">
    <citation type="journal article" date="2012" name="Proc. Natl. Acad. Sci. U.S.A.">
        <title>N-terminal acetylome analyses and functional insights of the N-terminal acetyltransferase NatB.</title>
        <authorList>
            <person name="Van Damme P."/>
            <person name="Lasa M."/>
            <person name="Polevoda B."/>
            <person name="Gazquez C."/>
            <person name="Elosegui-Artola A."/>
            <person name="Kim D.S."/>
            <person name="De Juan-Pardo E."/>
            <person name="Demeyer K."/>
            <person name="Hole K."/>
            <person name="Larrea E."/>
            <person name="Timmerman E."/>
            <person name="Prieto J."/>
            <person name="Arnesen T."/>
            <person name="Sherman F."/>
            <person name="Gevaert K."/>
            <person name="Aldabe R."/>
        </authorList>
    </citation>
    <scope>IDENTIFICATION BY MASS SPECTROMETRY [LARGE SCALE ANALYSIS]</scope>
</reference>
<reference key="10">
    <citation type="journal article" date="2016" name="J. Cell Sci.">
        <title>Pex9p is a new yeast peroxisomal import receptor for PTS1-containing proteins.</title>
        <authorList>
            <person name="Effelsberg D."/>
            <person name="Cruz-Zaragoza L.D."/>
            <person name="Schliebs W."/>
            <person name="Erdmann R."/>
        </authorList>
    </citation>
    <scope>SUBCELLULAR LOCATION</scope>
</reference>
<reference key="11">
    <citation type="journal article" date="2022" name="Nature">
        <title>A peroxisomal ubiquitin ligase complex forms a retrotranslocation channel.</title>
        <authorList>
            <person name="Feng P."/>
            <person name="Wu X."/>
            <person name="Erramilli S.K."/>
            <person name="Paulo J.A."/>
            <person name="Knejski P."/>
            <person name="Gygi S.P."/>
            <person name="Kossiakoff A.A."/>
            <person name="Rapoport T.A."/>
        </authorList>
    </citation>
    <scope>FUNCTION</scope>
    <scope>CATALYTIC ACTIVITY</scope>
    <scope>ACTIVITY REGULATION</scope>
    <scope>SUBCELLULAR LOCATION</scope>
    <scope>PATHWAY</scope>
    <scope>IDENTIFICATION IN THE PEX2-PEX10-PEX12 RETROTRANSLOCATION CHANNEL</scope>
    <scope>MUTAGENESIS OF LEU-270; LEU-288; CYS-301 AND ARG-324</scope>
</reference>